<accession>O52751</accession>
<name>RUVC_NOSS1</name>
<reference key="1">
    <citation type="journal article" date="1998" name="Science">
        <title>Heterocyst pattern formation controlled by a diffusible peptide.</title>
        <authorList>
            <person name="Yoon H.-S."/>
            <person name="Golden J.W."/>
        </authorList>
    </citation>
    <scope>NUCLEOTIDE SEQUENCE [GENOMIC DNA]</scope>
</reference>
<reference key="2">
    <citation type="journal article" date="2001" name="DNA Res.">
        <title>Complete genomic sequence of the filamentous nitrogen-fixing cyanobacterium Anabaena sp. strain PCC 7120.</title>
        <authorList>
            <person name="Kaneko T."/>
            <person name="Nakamura Y."/>
            <person name="Wolk C.P."/>
            <person name="Kuritz T."/>
            <person name="Sasamoto S."/>
            <person name="Watanabe A."/>
            <person name="Iriguchi M."/>
            <person name="Ishikawa A."/>
            <person name="Kawashima K."/>
            <person name="Kimura T."/>
            <person name="Kishida Y."/>
            <person name="Kohara M."/>
            <person name="Matsumoto M."/>
            <person name="Matsuno A."/>
            <person name="Muraki A."/>
            <person name="Nakazaki N."/>
            <person name="Shimpo S."/>
            <person name="Sugimoto M."/>
            <person name="Takazawa M."/>
            <person name="Yamada M."/>
            <person name="Yasuda M."/>
            <person name="Tabata S."/>
        </authorList>
    </citation>
    <scope>NUCLEOTIDE SEQUENCE [LARGE SCALE GENOMIC DNA]</scope>
    <source>
        <strain>PCC 7120 / SAG 25.82 / UTEX 2576</strain>
    </source>
</reference>
<proteinExistence type="inferred from homology"/>
<protein>
    <recommendedName>
        <fullName evidence="1">Crossover junction endodeoxyribonuclease RuvC</fullName>
        <ecNumber evidence="1">3.1.21.10</ecNumber>
    </recommendedName>
    <alternativeName>
        <fullName evidence="1">Holliday junction nuclease RuvC</fullName>
    </alternativeName>
    <alternativeName>
        <fullName evidence="1">Holliday junction resolvase RuvC</fullName>
    </alternativeName>
</protein>
<dbReference type="EC" id="3.1.21.10" evidence="1"/>
<dbReference type="EMBL" id="AF046871">
    <property type="protein sequence ID" value="AAC03106.1"/>
    <property type="molecule type" value="Genomic_DNA"/>
</dbReference>
<dbReference type="EMBL" id="BA000019">
    <property type="protein sequence ID" value="BAB73996.1"/>
    <property type="molecule type" value="Genomic_DNA"/>
</dbReference>
<dbReference type="PIR" id="AB2093">
    <property type="entry name" value="AB2093"/>
</dbReference>
<dbReference type="RefSeq" id="WP_010996454.1">
    <property type="nucleotide sequence ID" value="NZ_RSCN01000004.1"/>
</dbReference>
<dbReference type="SMR" id="O52751"/>
<dbReference type="STRING" id="103690.gene:10494326"/>
<dbReference type="KEGG" id="ana:all2297"/>
<dbReference type="eggNOG" id="COG0817">
    <property type="taxonomic scope" value="Bacteria"/>
</dbReference>
<dbReference type="OrthoDB" id="9805499at2"/>
<dbReference type="Proteomes" id="UP000002483">
    <property type="component" value="Chromosome"/>
</dbReference>
<dbReference type="GO" id="GO:0005737">
    <property type="term" value="C:cytoplasm"/>
    <property type="evidence" value="ECO:0007669"/>
    <property type="project" value="UniProtKB-SubCell"/>
</dbReference>
<dbReference type="GO" id="GO:0048476">
    <property type="term" value="C:Holliday junction resolvase complex"/>
    <property type="evidence" value="ECO:0007669"/>
    <property type="project" value="UniProtKB-UniRule"/>
</dbReference>
<dbReference type="GO" id="GO:0008821">
    <property type="term" value="F:crossover junction DNA endonuclease activity"/>
    <property type="evidence" value="ECO:0007669"/>
    <property type="project" value="UniProtKB-UniRule"/>
</dbReference>
<dbReference type="GO" id="GO:0003677">
    <property type="term" value="F:DNA binding"/>
    <property type="evidence" value="ECO:0007669"/>
    <property type="project" value="UniProtKB-KW"/>
</dbReference>
<dbReference type="GO" id="GO:0000287">
    <property type="term" value="F:magnesium ion binding"/>
    <property type="evidence" value="ECO:0007669"/>
    <property type="project" value="UniProtKB-UniRule"/>
</dbReference>
<dbReference type="GO" id="GO:0006310">
    <property type="term" value="P:DNA recombination"/>
    <property type="evidence" value="ECO:0007669"/>
    <property type="project" value="UniProtKB-UniRule"/>
</dbReference>
<dbReference type="GO" id="GO:0006281">
    <property type="term" value="P:DNA repair"/>
    <property type="evidence" value="ECO:0007669"/>
    <property type="project" value="UniProtKB-UniRule"/>
</dbReference>
<dbReference type="CDD" id="cd16962">
    <property type="entry name" value="RuvC"/>
    <property type="match status" value="1"/>
</dbReference>
<dbReference type="FunFam" id="3.30.420.10:FF:000002">
    <property type="entry name" value="Crossover junction endodeoxyribonuclease RuvC"/>
    <property type="match status" value="1"/>
</dbReference>
<dbReference type="Gene3D" id="3.30.420.10">
    <property type="entry name" value="Ribonuclease H-like superfamily/Ribonuclease H"/>
    <property type="match status" value="1"/>
</dbReference>
<dbReference type="HAMAP" id="MF_00034">
    <property type="entry name" value="RuvC"/>
    <property type="match status" value="1"/>
</dbReference>
<dbReference type="InterPro" id="IPR012337">
    <property type="entry name" value="RNaseH-like_sf"/>
</dbReference>
<dbReference type="InterPro" id="IPR036397">
    <property type="entry name" value="RNaseH_sf"/>
</dbReference>
<dbReference type="InterPro" id="IPR020563">
    <property type="entry name" value="X-over_junc_endoDNase_Mg_BS"/>
</dbReference>
<dbReference type="InterPro" id="IPR002176">
    <property type="entry name" value="X-over_junc_endoDNase_RuvC"/>
</dbReference>
<dbReference type="NCBIfam" id="NF000711">
    <property type="entry name" value="PRK00039.2-1"/>
    <property type="match status" value="1"/>
</dbReference>
<dbReference type="NCBIfam" id="TIGR00228">
    <property type="entry name" value="ruvC"/>
    <property type="match status" value="1"/>
</dbReference>
<dbReference type="PANTHER" id="PTHR30194">
    <property type="entry name" value="CROSSOVER JUNCTION ENDODEOXYRIBONUCLEASE RUVC"/>
    <property type="match status" value="1"/>
</dbReference>
<dbReference type="PANTHER" id="PTHR30194:SF3">
    <property type="entry name" value="CROSSOVER JUNCTION ENDODEOXYRIBONUCLEASE RUVC"/>
    <property type="match status" value="1"/>
</dbReference>
<dbReference type="Pfam" id="PF02075">
    <property type="entry name" value="RuvC"/>
    <property type="match status" value="1"/>
</dbReference>
<dbReference type="PRINTS" id="PR00696">
    <property type="entry name" value="RSOLVASERUVC"/>
</dbReference>
<dbReference type="SUPFAM" id="SSF53098">
    <property type="entry name" value="Ribonuclease H-like"/>
    <property type="match status" value="1"/>
</dbReference>
<dbReference type="PROSITE" id="PS01321">
    <property type="entry name" value="RUVC"/>
    <property type="match status" value="1"/>
</dbReference>
<keyword id="KW-0963">Cytoplasm</keyword>
<keyword id="KW-0227">DNA damage</keyword>
<keyword id="KW-0233">DNA recombination</keyword>
<keyword id="KW-0234">DNA repair</keyword>
<keyword id="KW-0238">DNA-binding</keyword>
<keyword id="KW-0255">Endonuclease</keyword>
<keyword id="KW-0378">Hydrolase</keyword>
<keyword id="KW-0460">Magnesium</keyword>
<keyword id="KW-0479">Metal-binding</keyword>
<keyword id="KW-0540">Nuclease</keyword>
<keyword id="KW-1185">Reference proteome</keyword>
<comment type="function">
    <text evidence="1">The RuvA-RuvB-RuvC complex processes Holliday junction (HJ) DNA during genetic recombination and DNA repair. Endonuclease that resolves HJ intermediates. Cleaves cruciform DNA by making single-stranded nicks across the HJ at symmetrical positions within the homologous arms, yielding a 5'-phosphate and a 3'-hydroxyl group; requires a central core of homology in the junction. The consensus cleavage sequence is 5'-(A/T)TT(C/G)-3'. Cleavage occurs on the 3'-side of the TT dinucleotide at the point of strand exchange. HJ branch migration catalyzed by RuvA-RuvB allows RuvC to scan DNA until it finds its consensus sequence, where it cleaves and resolves the cruciform DNA.</text>
</comment>
<comment type="catalytic activity">
    <reaction evidence="1">
        <text>Endonucleolytic cleavage at a junction such as a reciprocal single-stranded crossover between two homologous DNA duplexes (Holliday junction).</text>
        <dbReference type="EC" id="3.1.21.10"/>
    </reaction>
</comment>
<comment type="cofactor">
    <cofactor evidence="1">
        <name>Mg(2+)</name>
        <dbReference type="ChEBI" id="CHEBI:18420"/>
    </cofactor>
    <text evidence="1">Binds 2 Mg(2+) ion per subunit.</text>
</comment>
<comment type="subunit">
    <text evidence="1">Homodimer which binds Holliday junction (HJ) DNA. The HJ becomes 2-fold symmetrical on binding to RuvC with unstacked arms; it has a different conformation from HJ DNA in complex with RuvA. In the full resolvosome a probable DNA-RuvA(4)-RuvB(12)-RuvC(2) complex forms which resolves the HJ.</text>
</comment>
<comment type="subcellular location">
    <subcellularLocation>
        <location evidence="1">Cytoplasm</location>
    </subcellularLocation>
</comment>
<comment type="similarity">
    <text evidence="1 2">Belongs to the RuvC family.</text>
</comment>
<gene>
    <name evidence="1" type="primary">ruvC</name>
    <name type="ordered locus">all2297</name>
</gene>
<sequence length="163" mass="17741">MEKRILGLDPGLAILGFGAITCTPGLTQLQSTKVNVLDFGVIKTSADIEIGQRLCTLFDDLHTVIDQLQPDVVAIEKLFFYRMSSTIVVAQARGVVMLALAQHHLPYVEFTPAQIKLALTGYGNADKSEVQEAVARELDLAEIPRPDDAADALAVALTAWYQM</sequence>
<feature type="chain" id="PRO_0000183075" description="Crossover junction endodeoxyribonuclease RuvC">
    <location>
        <begin position="1"/>
        <end position="163"/>
    </location>
</feature>
<feature type="active site" evidence="1">
    <location>
        <position position="9"/>
    </location>
</feature>
<feature type="active site" evidence="1">
    <location>
        <position position="76"/>
    </location>
</feature>
<feature type="active site" evidence="1">
    <location>
        <position position="148"/>
    </location>
</feature>
<feature type="binding site" evidence="1">
    <location>
        <position position="9"/>
    </location>
    <ligand>
        <name>Mg(2+)</name>
        <dbReference type="ChEBI" id="CHEBI:18420"/>
        <label>1</label>
    </ligand>
</feature>
<feature type="binding site" evidence="1">
    <location>
        <position position="76"/>
    </location>
    <ligand>
        <name>Mg(2+)</name>
        <dbReference type="ChEBI" id="CHEBI:18420"/>
        <label>2</label>
    </ligand>
</feature>
<feature type="binding site" evidence="1">
    <location>
        <position position="148"/>
    </location>
    <ligand>
        <name>Mg(2+)</name>
        <dbReference type="ChEBI" id="CHEBI:18420"/>
        <label>1</label>
    </ligand>
</feature>
<organism>
    <name type="scientific">Nostoc sp. (strain PCC 7120 / SAG 25.82 / UTEX 2576)</name>
    <dbReference type="NCBI Taxonomy" id="103690"/>
    <lineage>
        <taxon>Bacteria</taxon>
        <taxon>Bacillati</taxon>
        <taxon>Cyanobacteriota</taxon>
        <taxon>Cyanophyceae</taxon>
        <taxon>Nostocales</taxon>
        <taxon>Nostocaceae</taxon>
        <taxon>Nostoc</taxon>
    </lineage>
</organism>
<evidence type="ECO:0000255" key="1">
    <source>
        <dbReference type="HAMAP-Rule" id="MF_00034"/>
    </source>
</evidence>
<evidence type="ECO:0000305" key="2"/>